<reference key="1">
    <citation type="journal article" date="2005" name="Science">
        <title>The transcriptional landscape of the mammalian genome.</title>
        <authorList>
            <person name="Carninci P."/>
            <person name="Kasukawa T."/>
            <person name="Katayama S."/>
            <person name="Gough J."/>
            <person name="Frith M.C."/>
            <person name="Maeda N."/>
            <person name="Oyama R."/>
            <person name="Ravasi T."/>
            <person name="Lenhard B."/>
            <person name="Wells C."/>
            <person name="Kodzius R."/>
            <person name="Shimokawa K."/>
            <person name="Bajic V.B."/>
            <person name="Brenner S.E."/>
            <person name="Batalov S."/>
            <person name="Forrest A.R."/>
            <person name="Zavolan M."/>
            <person name="Davis M.J."/>
            <person name="Wilming L.G."/>
            <person name="Aidinis V."/>
            <person name="Allen J.E."/>
            <person name="Ambesi-Impiombato A."/>
            <person name="Apweiler R."/>
            <person name="Aturaliya R.N."/>
            <person name="Bailey T.L."/>
            <person name="Bansal M."/>
            <person name="Baxter L."/>
            <person name="Beisel K.W."/>
            <person name="Bersano T."/>
            <person name="Bono H."/>
            <person name="Chalk A.M."/>
            <person name="Chiu K.P."/>
            <person name="Choudhary V."/>
            <person name="Christoffels A."/>
            <person name="Clutterbuck D.R."/>
            <person name="Crowe M.L."/>
            <person name="Dalla E."/>
            <person name="Dalrymple B.P."/>
            <person name="de Bono B."/>
            <person name="Della Gatta G."/>
            <person name="di Bernardo D."/>
            <person name="Down T."/>
            <person name="Engstrom P."/>
            <person name="Fagiolini M."/>
            <person name="Faulkner G."/>
            <person name="Fletcher C.F."/>
            <person name="Fukushima T."/>
            <person name="Furuno M."/>
            <person name="Futaki S."/>
            <person name="Gariboldi M."/>
            <person name="Georgii-Hemming P."/>
            <person name="Gingeras T.R."/>
            <person name="Gojobori T."/>
            <person name="Green R.E."/>
            <person name="Gustincich S."/>
            <person name="Harbers M."/>
            <person name="Hayashi Y."/>
            <person name="Hensch T.K."/>
            <person name="Hirokawa N."/>
            <person name="Hill D."/>
            <person name="Huminiecki L."/>
            <person name="Iacono M."/>
            <person name="Ikeo K."/>
            <person name="Iwama A."/>
            <person name="Ishikawa T."/>
            <person name="Jakt M."/>
            <person name="Kanapin A."/>
            <person name="Katoh M."/>
            <person name="Kawasawa Y."/>
            <person name="Kelso J."/>
            <person name="Kitamura H."/>
            <person name="Kitano H."/>
            <person name="Kollias G."/>
            <person name="Krishnan S.P."/>
            <person name="Kruger A."/>
            <person name="Kummerfeld S.K."/>
            <person name="Kurochkin I.V."/>
            <person name="Lareau L.F."/>
            <person name="Lazarevic D."/>
            <person name="Lipovich L."/>
            <person name="Liu J."/>
            <person name="Liuni S."/>
            <person name="McWilliam S."/>
            <person name="Madan Babu M."/>
            <person name="Madera M."/>
            <person name="Marchionni L."/>
            <person name="Matsuda H."/>
            <person name="Matsuzawa S."/>
            <person name="Miki H."/>
            <person name="Mignone F."/>
            <person name="Miyake S."/>
            <person name="Morris K."/>
            <person name="Mottagui-Tabar S."/>
            <person name="Mulder N."/>
            <person name="Nakano N."/>
            <person name="Nakauchi H."/>
            <person name="Ng P."/>
            <person name="Nilsson R."/>
            <person name="Nishiguchi S."/>
            <person name="Nishikawa S."/>
            <person name="Nori F."/>
            <person name="Ohara O."/>
            <person name="Okazaki Y."/>
            <person name="Orlando V."/>
            <person name="Pang K.C."/>
            <person name="Pavan W.J."/>
            <person name="Pavesi G."/>
            <person name="Pesole G."/>
            <person name="Petrovsky N."/>
            <person name="Piazza S."/>
            <person name="Reed J."/>
            <person name="Reid J.F."/>
            <person name="Ring B.Z."/>
            <person name="Ringwald M."/>
            <person name="Rost B."/>
            <person name="Ruan Y."/>
            <person name="Salzberg S.L."/>
            <person name="Sandelin A."/>
            <person name="Schneider C."/>
            <person name="Schoenbach C."/>
            <person name="Sekiguchi K."/>
            <person name="Semple C.A."/>
            <person name="Seno S."/>
            <person name="Sessa L."/>
            <person name="Sheng Y."/>
            <person name="Shibata Y."/>
            <person name="Shimada H."/>
            <person name="Shimada K."/>
            <person name="Silva D."/>
            <person name="Sinclair B."/>
            <person name="Sperling S."/>
            <person name="Stupka E."/>
            <person name="Sugiura K."/>
            <person name="Sultana R."/>
            <person name="Takenaka Y."/>
            <person name="Taki K."/>
            <person name="Tammoja K."/>
            <person name="Tan S.L."/>
            <person name="Tang S."/>
            <person name="Taylor M.S."/>
            <person name="Tegner J."/>
            <person name="Teichmann S.A."/>
            <person name="Ueda H.R."/>
            <person name="van Nimwegen E."/>
            <person name="Verardo R."/>
            <person name="Wei C.L."/>
            <person name="Yagi K."/>
            <person name="Yamanishi H."/>
            <person name="Zabarovsky E."/>
            <person name="Zhu S."/>
            <person name="Zimmer A."/>
            <person name="Hide W."/>
            <person name="Bult C."/>
            <person name="Grimmond S.M."/>
            <person name="Teasdale R.D."/>
            <person name="Liu E.T."/>
            <person name="Brusic V."/>
            <person name="Quackenbush J."/>
            <person name="Wahlestedt C."/>
            <person name="Mattick J.S."/>
            <person name="Hume D.A."/>
            <person name="Kai C."/>
            <person name="Sasaki D."/>
            <person name="Tomaru Y."/>
            <person name="Fukuda S."/>
            <person name="Kanamori-Katayama M."/>
            <person name="Suzuki M."/>
            <person name="Aoki J."/>
            <person name="Arakawa T."/>
            <person name="Iida J."/>
            <person name="Imamura K."/>
            <person name="Itoh M."/>
            <person name="Kato T."/>
            <person name="Kawaji H."/>
            <person name="Kawagashira N."/>
            <person name="Kawashima T."/>
            <person name="Kojima M."/>
            <person name="Kondo S."/>
            <person name="Konno H."/>
            <person name="Nakano K."/>
            <person name="Ninomiya N."/>
            <person name="Nishio T."/>
            <person name="Okada M."/>
            <person name="Plessy C."/>
            <person name="Shibata K."/>
            <person name="Shiraki T."/>
            <person name="Suzuki S."/>
            <person name="Tagami M."/>
            <person name="Waki K."/>
            <person name="Watahiki A."/>
            <person name="Okamura-Oho Y."/>
            <person name="Suzuki H."/>
            <person name="Kawai J."/>
            <person name="Hayashizaki Y."/>
        </authorList>
    </citation>
    <scope>NUCLEOTIDE SEQUENCE [LARGE SCALE MRNA]</scope>
    <source>
        <strain>NOD</strain>
    </source>
</reference>
<reference key="2">
    <citation type="submission" date="2005-07" db="EMBL/GenBank/DDBJ databases">
        <authorList>
            <person name="Mural R.J."/>
            <person name="Adams M.D."/>
            <person name="Myers E.W."/>
            <person name="Smith H.O."/>
            <person name="Venter J.C."/>
        </authorList>
    </citation>
    <scope>NUCLEOTIDE SEQUENCE [LARGE SCALE GENOMIC DNA]</scope>
</reference>
<reference key="3">
    <citation type="journal article" date="2004" name="Genome Res.">
        <title>The status, quality, and expansion of the NIH full-length cDNA project: the Mammalian Gene Collection (MGC).</title>
        <authorList>
            <consortium name="The MGC Project Team"/>
        </authorList>
    </citation>
    <scope>NUCLEOTIDE SEQUENCE [LARGE SCALE MRNA]</scope>
    <source>
        <strain>FVB/N</strain>
        <tissue>Kidney</tissue>
    </source>
</reference>
<reference key="4">
    <citation type="journal article" date="2010" name="Cell">
        <title>A tissue-specific atlas of mouse protein phosphorylation and expression.</title>
        <authorList>
            <person name="Huttlin E.L."/>
            <person name="Jedrychowski M.P."/>
            <person name="Elias J.E."/>
            <person name="Goswami T."/>
            <person name="Rad R."/>
            <person name="Beausoleil S.A."/>
            <person name="Villen J."/>
            <person name="Haas W."/>
            <person name="Sowa M.E."/>
            <person name="Gygi S.P."/>
        </authorList>
    </citation>
    <scope>IDENTIFICATION BY MASS SPECTROMETRY [LARGE SCALE ANALYSIS]</scope>
    <source>
        <tissue>Brain</tissue>
    </source>
</reference>
<reference key="5">
    <citation type="journal article" date="2011" name="EMBO J.">
        <title>SCF(FBXL15) regulates BMP signalling by directing the degradation of HECT-type ubiquitin ligase Smurf1.</title>
        <authorList>
            <person name="Cui Y."/>
            <person name="He S."/>
            <person name="Xing C."/>
            <person name="Lu K."/>
            <person name="Wang J."/>
            <person name="Xing G."/>
            <person name="Meng A."/>
            <person name="Jia S."/>
            <person name="He F."/>
            <person name="Zhang L."/>
        </authorList>
    </citation>
    <scope>TISSUE SPECIFICITY</scope>
</reference>
<accession>Q91W61</accession>
<accession>Q3T9R4</accession>
<sequence>MEPPMEQSGGEQEPGAVRLLDLPWEDVLLPHVLNWVPLRQLLRLQRVSRAFRALVQLHLARLRRFDAAQVGPQIPRAALARLLRDAEGLQELALAPCHEWLSDEDLVPVLARNPQLRSVALAGCGQLSRRALGALAEGCPRLQRLSLAHCDWVDGLALRGLADRCPALEELDLTACRQLKDEAIVYLAQRRGAGLRSLSLAVNANVGDTAVQELARNCPQLEHLDLTGCLRVGSDGVRTLAEYCPALRSLRVRHCHHVAEPSLSRLRKRGVDIDVEPPLHQALVLLQDMAGFAPFVNLQV</sequence>
<comment type="function">
    <text evidence="1">Substrate recognition component of a SCF (SKP1-CUL1-F-box protein) E3 ubiquitin-protein ligase complex which mediates the ubiquitination and subsequent proteasomal degradation of SMURF1, thereby acting as a positive regulator of the BMP signaling pathway. Required for dorsal/ventral pattern formation and bone mass maintenance. Also mediates ubiquitination of SMURF2 and WWP2 (By similarity).</text>
</comment>
<comment type="pathway">
    <text>Protein modification; protein ubiquitination.</text>
</comment>
<comment type="subunit">
    <text evidence="1">Part of the SCF (SKP1-CUL1-F-box) E3 ubiquitin-protein ligase complex SCF(FBXL15) composed of CUL1, SKP1, RBX1 and FBXL15.</text>
</comment>
<comment type="subcellular location">
    <subcellularLocation>
        <location evidence="1">Cytoplasm</location>
    </subcellularLocation>
</comment>
<comment type="tissue specificity">
    <text evidence="3">Expressed in heart, liver, spleen, bone, muscle, brain and kidney (at protein level).</text>
</comment>
<comment type="similarity">
    <text evidence="4">Belongs to the FBXL15 family.</text>
</comment>
<comment type="sequence caution" evidence="4">
    <conflict type="frameshift">
        <sequence resource="EMBL" id="AK003032"/>
    </conflict>
</comment>
<keyword id="KW-0007">Acetylation</keyword>
<keyword id="KW-0963">Cytoplasm</keyword>
<keyword id="KW-0433">Leucine-rich repeat</keyword>
<keyword id="KW-1185">Reference proteome</keyword>
<keyword id="KW-0677">Repeat</keyword>
<keyword id="KW-0833">Ubl conjugation pathway</keyword>
<protein>
    <recommendedName>
        <fullName>F-box/LRR-repeat protein 15</fullName>
    </recommendedName>
    <alternativeName>
        <fullName>F-box only protein 37</fullName>
    </alternativeName>
</protein>
<evidence type="ECO:0000250" key="1"/>
<evidence type="ECO:0000250" key="2">
    <source>
        <dbReference type="UniProtKB" id="Q9H469"/>
    </source>
</evidence>
<evidence type="ECO:0000269" key="3">
    <source>
    </source>
</evidence>
<evidence type="ECO:0000305" key="4"/>
<dbReference type="EMBL" id="AK003032">
    <property type="status" value="NOT_ANNOTATED_CDS"/>
    <property type="molecule type" value="mRNA"/>
</dbReference>
<dbReference type="EMBL" id="AK172339">
    <property type="protein sequence ID" value="BAE42956.1"/>
    <property type="molecule type" value="mRNA"/>
</dbReference>
<dbReference type="EMBL" id="CH466534">
    <property type="protein sequence ID" value="EDL41989.1"/>
    <property type="molecule type" value="Genomic_DNA"/>
</dbReference>
<dbReference type="EMBL" id="BC016499">
    <property type="protein sequence ID" value="AAH16499.1"/>
    <property type="molecule type" value="mRNA"/>
</dbReference>
<dbReference type="CCDS" id="CCDS38007.1"/>
<dbReference type="RefSeq" id="NP_598455.2">
    <property type="nucleotide sequence ID" value="NM_133694.2"/>
</dbReference>
<dbReference type="RefSeq" id="XP_036017571.1">
    <property type="nucleotide sequence ID" value="XM_036161678.1"/>
</dbReference>
<dbReference type="SMR" id="Q91W61"/>
<dbReference type="BioGRID" id="212850">
    <property type="interactions" value="5"/>
</dbReference>
<dbReference type="FunCoup" id="Q91W61">
    <property type="interactions" value="98"/>
</dbReference>
<dbReference type="STRING" id="10090.ENSMUSP00000026256"/>
<dbReference type="iPTMnet" id="Q91W61"/>
<dbReference type="PhosphoSitePlus" id="Q91W61"/>
<dbReference type="PaxDb" id="10090-ENSMUSP00000026256"/>
<dbReference type="PeptideAtlas" id="Q91W61"/>
<dbReference type="ProteomicsDB" id="271653"/>
<dbReference type="Pumba" id="Q91W61"/>
<dbReference type="Antibodypedia" id="53264">
    <property type="antibodies" value="88 antibodies from 15 providers"/>
</dbReference>
<dbReference type="DNASU" id="68431"/>
<dbReference type="Ensembl" id="ENSMUST00000026256.9">
    <property type="protein sequence ID" value="ENSMUSP00000026256.3"/>
    <property type="gene ID" value="ENSMUSG00000025226.12"/>
</dbReference>
<dbReference type="Ensembl" id="ENSMUST00000177667.2">
    <property type="protein sequence ID" value="ENSMUSP00000137489.2"/>
    <property type="gene ID" value="ENSMUSG00000025226.12"/>
</dbReference>
<dbReference type="GeneID" id="68431"/>
<dbReference type="KEGG" id="mmu:68431"/>
<dbReference type="UCSC" id="uc008hte.1">
    <property type="organism name" value="mouse"/>
</dbReference>
<dbReference type="AGR" id="MGI:1915681"/>
<dbReference type="CTD" id="79176"/>
<dbReference type="MGI" id="MGI:1915681">
    <property type="gene designation" value="Fbxl15"/>
</dbReference>
<dbReference type="VEuPathDB" id="HostDB:ENSMUSG00000025226"/>
<dbReference type="eggNOG" id="KOG1947">
    <property type="taxonomic scope" value="Eukaryota"/>
</dbReference>
<dbReference type="GeneTree" id="ENSGT00940000160250"/>
<dbReference type="HOGENOM" id="CLU_065717_2_0_1"/>
<dbReference type="InParanoid" id="Q91W61"/>
<dbReference type="OMA" id="CHRITER"/>
<dbReference type="OrthoDB" id="27842at2759"/>
<dbReference type="PhylomeDB" id="Q91W61"/>
<dbReference type="TreeFam" id="TF326769"/>
<dbReference type="Reactome" id="R-MMU-8951664">
    <property type="pathway name" value="Neddylation"/>
</dbReference>
<dbReference type="Reactome" id="R-MMU-983168">
    <property type="pathway name" value="Antigen processing: Ubiquitination &amp; Proteasome degradation"/>
</dbReference>
<dbReference type="UniPathway" id="UPA00143"/>
<dbReference type="BioGRID-ORCS" id="68431">
    <property type="hits" value="1 hit in 77 CRISPR screens"/>
</dbReference>
<dbReference type="PRO" id="PR:Q91W61"/>
<dbReference type="Proteomes" id="UP000000589">
    <property type="component" value="Chromosome 19"/>
</dbReference>
<dbReference type="RNAct" id="Q91W61">
    <property type="molecule type" value="protein"/>
</dbReference>
<dbReference type="Bgee" id="ENSMUSG00000025226">
    <property type="expression patterns" value="Expressed in right kidney and 141 other cell types or tissues"/>
</dbReference>
<dbReference type="GO" id="GO:0005737">
    <property type="term" value="C:cytoplasm"/>
    <property type="evidence" value="ECO:0000250"/>
    <property type="project" value="UniProtKB"/>
</dbReference>
<dbReference type="GO" id="GO:0019005">
    <property type="term" value="C:SCF ubiquitin ligase complex"/>
    <property type="evidence" value="ECO:0000250"/>
    <property type="project" value="UniProtKB"/>
</dbReference>
<dbReference type="GO" id="GO:0030282">
    <property type="term" value="P:bone mineralization"/>
    <property type="evidence" value="ECO:0000250"/>
    <property type="project" value="UniProtKB"/>
</dbReference>
<dbReference type="GO" id="GO:0009953">
    <property type="term" value="P:dorsal/ventral pattern formation"/>
    <property type="evidence" value="ECO:0000250"/>
    <property type="project" value="UniProtKB"/>
</dbReference>
<dbReference type="GO" id="GO:0000086">
    <property type="term" value="P:G2/M transition of mitotic cell cycle"/>
    <property type="evidence" value="ECO:0000250"/>
    <property type="project" value="UniProtKB"/>
</dbReference>
<dbReference type="GO" id="GO:0030513">
    <property type="term" value="P:positive regulation of BMP signaling pathway"/>
    <property type="evidence" value="ECO:0000250"/>
    <property type="project" value="UniProtKB"/>
</dbReference>
<dbReference type="GO" id="GO:0016567">
    <property type="term" value="P:protein ubiquitination"/>
    <property type="evidence" value="ECO:0000250"/>
    <property type="project" value="UniProtKB"/>
</dbReference>
<dbReference type="GO" id="GO:0031146">
    <property type="term" value="P:SCF-dependent proteasomal ubiquitin-dependent protein catabolic process"/>
    <property type="evidence" value="ECO:0000250"/>
    <property type="project" value="UniProtKB"/>
</dbReference>
<dbReference type="CDD" id="cd22126">
    <property type="entry name" value="F-box_FBXL15"/>
    <property type="match status" value="1"/>
</dbReference>
<dbReference type="FunFam" id="3.80.10.10:FF:000113">
    <property type="entry name" value="F-box/LRR-repeat protein 15 isoform X1"/>
    <property type="match status" value="1"/>
</dbReference>
<dbReference type="Gene3D" id="3.80.10.10">
    <property type="entry name" value="Ribonuclease Inhibitor"/>
    <property type="match status" value="1"/>
</dbReference>
<dbReference type="InterPro" id="IPR036047">
    <property type="entry name" value="F-box-like_dom_sf"/>
</dbReference>
<dbReference type="InterPro" id="IPR001810">
    <property type="entry name" value="F-box_dom"/>
</dbReference>
<dbReference type="InterPro" id="IPR001611">
    <property type="entry name" value="Leu-rich_rpt"/>
</dbReference>
<dbReference type="InterPro" id="IPR006553">
    <property type="entry name" value="Leu-rich_rpt_Cys-con_subtyp"/>
</dbReference>
<dbReference type="InterPro" id="IPR032675">
    <property type="entry name" value="LRR_dom_sf"/>
</dbReference>
<dbReference type="InterPro" id="IPR055411">
    <property type="entry name" value="LRR_FXL15/At3g58940/PEG3-like"/>
</dbReference>
<dbReference type="PANTHER" id="PTHR13318:SF179">
    <property type="entry name" value="F-BOX_LRR-REPEAT PROTEIN 15"/>
    <property type="match status" value="1"/>
</dbReference>
<dbReference type="PANTHER" id="PTHR13318">
    <property type="entry name" value="PARTNER OF PAIRED, ISOFORM B-RELATED"/>
    <property type="match status" value="1"/>
</dbReference>
<dbReference type="Pfam" id="PF00646">
    <property type="entry name" value="F-box"/>
    <property type="match status" value="1"/>
</dbReference>
<dbReference type="Pfam" id="PF13516">
    <property type="entry name" value="LRR_6"/>
    <property type="match status" value="1"/>
</dbReference>
<dbReference type="Pfam" id="PF24758">
    <property type="entry name" value="LRR_At5g56370"/>
    <property type="match status" value="1"/>
</dbReference>
<dbReference type="SMART" id="SM00367">
    <property type="entry name" value="LRR_CC"/>
    <property type="match status" value="6"/>
</dbReference>
<dbReference type="SUPFAM" id="SSF81383">
    <property type="entry name" value="F-box domain"/>
    <property type="match status" value="1"/>
</dbReference>
<dbReference type="SUPFAM" id="SSF52047">
    <property type="entry name" value="RNI-like"/>
    <property type="match status" value="1"/>
</dbReference>
<organism>
    <name type="scientific">Mus musculus</name>
    <name type="common">Mouse</name>
    <dbReference type="NCBI Taxonomy" id="10090"/>
    <lineage>
        <taxon>Eukaryota</taxon>
        <taxon>Metazoa</taxon>
        <taxon>Chordata</taxon>
        <taxon>Craniata</taxon>
        <taxon>Vertebrata</taxon>
        <taxon>Euteleostomi</taxon>
        <taxon>Mammalia</taxon>
        <taxon>Eutheria</taxon>
        <taxon>Euarchontoglires</taxon>
        <taxon>Glires</taxon>
        <taxon>Rodentia</taxon>
        <taxon>Myomorpha</taxon>
        <taxon>Muroidea</taxon>
        <taxon>Muridae</taxon>
        <taxon>Murinae</taxon>
        <taxon>Mus</taxon>
        <taxon>Mus</taxon>
    </lineage>
</organism>
<proteinExistence type="evidence at protein level"/>
<feature type="chain" id="PRO_0000119932" description="F-box/LRR-repeat protein 15">
    <location>
        <begin position="1"/>
        <end position="300"/>
    </location>
</feature>
<feature type="domain" description="F-box">
    <location>
        <begin position="19"/>
        <end position="66"/>
    </location>
</feature>
<feature type="repeat" description="LRR 1">
    <location>
        <begin position="141"/>
        <end position="162"/>
    </location>
</feature>
<feature type="repeat" description="LRR 2">
    <location>
        <begin position="167"/>
        <end position="188"/>
    </location>
</feature>
<feature type="repeat" description="LRR 3">
    <location>
        <begin position="194"/>
        <end position="215"/>
    </location>
</feature>
<feature type="repeat" description="LRR 4">
    <location>
        <begin position="220"/>
        <end position="241"/>
    </location>
</feature>
<feature type="repeat" description="LRR 5">
    <location>
        <begin position="246"/>
        <end position="267"/>
    </location>
</feature>
<feature type="region of interest" description="Interaction with SMURF1" evidence="1">
    <location>
        <begin position="113"/>
        <end position="269"/>
    </location>
</feature>
<feature type="modified residue" description="N-acetylmethionine" evidence="2">
    <location>
        <position position="1"/>
    </location>
</feature>
<feature type="sequence conflict" description="In Ref. 1; AK003032." evidence="4" ref="1">
    <original>E</original>
    <variation>D</variation>
    <location>
        <position position="13"/>
    </location>
</feature>
<feature type="sequence conflict" description="In Ref. 1; AK003032." evidence="4" ref="1">
    <original>P</original>
    <variation>S</variation>
    <location>
        <position position="245"/>
    </location>
</feature>
<gene>
    <name type="primary">Fbxl15</name>
    <name type="synonym">Fbxo37</name>
</gene>
<name>FXL15_MOUSE</name>